<sequence>MQTDNTKSNTNKTAKQEWWSCAFVICIALLIRILIMEPFTVPTGSMKATILENDYIFSTKYSYGYSNYSLSFFDFIPLFKGRIFAREPERGDIVVFRPPNDMNVRYIKRLIGLPGDKIQLIDDVIYINDKKIERTEVGTYTSEDGIKYLKFKETLPNGRTYFSYKLAPIFSVIYNDRYGNTDVFYVPEGKYFFLGDNRDQSNDSRVNLGFVPFENFIAKAQFIWFSTKINWWDNDIGVMNLVLRLKPWIESVRLNRIFRNLYNTDE</sequence>
<dbReference type="EC" id="3.4.21.89"/>
<dbReference type="EMBL" id="CP000847">
    <property type="protein sequence ID" value="ABV74503.1"/>
    <property type="molecule type" value="Genomic_DNA"/>
</dbReference>
<dbReference type="RefSeq" id="WP_012013373.1">
    <property type="nucleotide sequence ID" value="NC_009881.1"/>
</dbReference>
<dbReference type="SMR" id="A8GM78"/>
<dbReference type="STRING" id="293614.A1C_00865"/>
<dbReference type="MEROPS" id="S26.001"/>
<dbReference type="KEGG" id="rak:A1C_00865"/>
<dbReference type="eggNOG" id="COG0681">
    <property type="taxonomic scope" value="Bacteria"/>
</dbReference>
<dbReference type="HOGENOM" id="CLU_028723_1_2_5"/>
<dbReference type="Proteomes" id="UP000006830">
    <property type="component" value="Chromosome"/>
</dbReference>
<dbReference type="GO" id="GO:0005886">
    <property type="term" value="C:plasma membrane"/>
    <property type="evidence" value="ECO:0007669"/>
    <property type="project" value="UniProtKB-SubCell"/>
</dbReference>
<dbReference type="GO" id="GO:0004252">
    <property type="term" value="F:serine-type endopeptidase activity"/>
    <property type="evidence" value="ECO:0007669"/>
    <property type="project" value="UniProtKB-EC"/>
</dbReference>
<dbReference type="GO" id="GO:0006465">
    <property type="term" value="P:signal peptide processing"/>
    <property type="evidence" value="ECO:0007669"/>
    <property type="project" value="InterPro"/>
</dbReference>
<dbReference type="CDD" id="cd06530">
    <property type="entry name" value="S26_SPase_I"/>
    <property type="match status" value="1"/>
</dbReference>
<dbReference type="Gene3D" id="2.10.109.10">
    <property type="entry name" value="Umud Fragment, subunit A"/>
    <property type="match status" value="1"/>
</dbReference>
<dbReference type="InterPro" id="IPR036286">
    <property type="entry name" value="LexA/Signal_pep-like_sf"/>
</dbReference>
<dbReference type="InterPro" id="IPR000223">
    <property type="entry name" value="Pept_S26A_signal_pept_1"/>
</dbReference>
<dbReference type="InterPro" id="IPR019758">
    <property type="entry name" value="Pept_S26A_signal_pept_1_CS"/>
</dbReference>
<dbReference type="InterPro" id="IPR019757">
    <property type="entry name" value="Pept_S26A_signal_pept_1_Lys-AS"/>
</dbReference>
<dbReference type="InterPro" id="IPR019533">
    <property type="entry name" value="Peptidase_S26"/>
</dbReference>
<dbReference type="NCBIfam" id="TIGR02227">
    <property type="entry name" value="sigpep_I_bact"/>
    <property type="match status" value="1"/>
</dbReference>
<dbReference type="PANTHER" id="PTHR43390:SF1">
    <property type="entry name" value="CHLOROPLAST PROCESSING PEPTIDASE"/>
    <property type="match status" value="1"/>
</dbReference>
<dbReference type="PANTHER" id="PTHR43390">
    <property type="entry name" value="SIGNAL PEPTIDASE I"/>
    <property type="match status" value="1"/>
</dbReference>
<dbReference type="Pfam" id="PF10502">
    <property type="entry name" value="Peptidase_S26"/>
    <property type="match status" value="1"/>
</dbReference>
<dbReference type="PRINTS" id="PR00727">
    <property type="entry name" value="LEADERPTASE"/>
</dbReference>
<dbReference type="SUPFAM" id="SSF51306">
    <property type="entry name" value="LexA/Signal peptidase"/>
    <property type="match status" value="1"/>
</dbReference>
<dbReference type="PROSITE" id="PS00760">
    <property type="entry name" value="SPASE_I_2"/>
    <property type="match status" value="1"/>
</dbReference>
<dbReference type="PROSITE" id="PS00761">
    <property type="entry name" value="SPASE_I_3"/>
    <property type="match status" value="1"/>
</dbReference>
<name>LEP_RICAH</name>
<proteinExistence type="inferred from homology"/>
<accession>A8GM78</accession>
<feature type="chain" id="PRO_0000316271" description="Signal peptidase I">
    <location>
        <begin position="1"/>
        <end position="266"/>
    </location>
</feature>
<feature type="topological domain" description="Cytoplasmic" evidence="2">
    <location>
        <begin position="1"/>
        <end position="20"/>
    </location>
</feature>
<feature type="transmembrane region" description="Helical" evidence="2">
    <location>
        <begin position="21"/>
        <end position="41"/>
    </location>
</feature>
<feature type="topological domain" description="Periplasmic" evidence="2">
    <location>
        <begin position="42"/>
        <end position="266"/>
    </location>
</feature>
<feature type="active site" evidence="1">
    <location>
        <position position="45"/>
    </location>
</feature>
<feature type="active site" evidence="1">
    <location>
        <position position="108"/>
    </location>
</feature>
<organism>
    <name type="scientific">Rickettsia akari (strain Hartford)</name>
    <dbReference type="NCBI Taxonomy" id="293614"/>
    <lineage>
        <taxon>Bacteria</taxon>
        <taxon>Pseudomonadati</taxon>
        <taxon>Pseudomonadota</taxon>
        <taxon>Alphaproteobacteria</taxon>
        <taxon>Rickettsiales</taxon>
        <taxon>Rickettsiaceae</taxon>
        <taxon>Rickettsieae</taxon>
        <taxon>Rickettsia</taxon>
        <taxon>spotted fever group</taxon>
    </lineage>
</organism>
<keyword id="KW-0997">Cell inner membrane</keyword>
<keyword id="KW-1003">Cell membrane</keyword>
<keyword id="KW-0378">Hydrolase</keyword>
<keyword id="KW-0472">Membrane</keyword>
<keyword id="KW-0812">Transmembrane</keyword>
<keyword id="KW-1133">Transmembrane helix</keyword>
<evidence type="ECO:0000250" key="1"/>
<evidence type="ECO:0000255" key="2"/>
<evidence type="ECO:0000305" key="3"/>
<protein>
    <recommendedName>
        <fullName>Signal peptidase I</fullName>
        <shortName>SPase I</shortName>
        <ecNumber>3.4.21.89</ecNumber>
    </recommendedName>
    <alternativeName>
        <fullName>Leader peptidase I</fullName>
    </alternativeName>
</protein>
<reference key="1">
    <citation type="submission" date="2007-09" db="EMBL/GenBank/DDBJ databases">
        <title>Complete genome sequence of Rickettsia akari.</title>
        <authorList>
            <person name="Madan A."/>
            <person name="Fahey J."/>
            <person name="Helton E."/>
            <person name="Ketteman M."/>
            <person name="Madan A."/>
            <person name="Rodrigues S."/>
            <person name="Sanchez A."/>
            <person name="Whiting M."/>
            <person name="Dasch G."/>
            <person name="Eremeeva M."/>
        </authorList>
    </citation>
    <scope>NUCLEOTIDE SEQUENCE [LARGE SCALE GENOMIC DNA]</scope>
    <source>
        <strain>Hartford</strain>
    </source>
</reference>
<gene>
    <name type="primary">lepB</name>
    <name type="ordered locus">A1C_00865</name>
</gene>
<comment type="catalytic activity">
    <reaction>
        <text>Cleavage of hydrophobic, N-terminal signal or leader sequences from secreted and periplasmic proteins.</text>
        <dbReference type="EC" id="3.4.21.89"/>
    </reaction>
</comment>
<comment type="subcellular location">
    <subcellularLocation>
        <location evidence="3">Cell inner membrane</location>
        <topology evidence="3">Single-pass type II membrane protein</topology>
    </subcellularLocation>
</comment>
<comment type="similarity">
    <text evidence="3">Belongs to the peptidase S26 family.</text>
</comment>